<proteinExistence type="inferred from homology"/>
<comment type="function">
    <text evidence="1">Plays a role in a RAD51/RAD54-dependent homologous recombination repair (HRR) pathway to repair MMS-induced lesions during S-phase. Required for error-free repair of spontaneous and induced DNA lesions to protect the genome from mutation (By similarity).</text>
</comment>
<comment type="subcellular location">
    <subcellularLocation>
        <location evidence="1">Nucleus</location>
    </subcellularLocation>
</comment>
<comment type="similarity">
    <text evidence="2">Belongs to the SHU2 family.</text>
</comment>
<accession>Q6FM84</accession>
<keyword id="KW-0227">DNA damage</keyword>
<keyword id="KW-0233">DNA recombination</keyword>
<keyword id="KW-0234">DNA repair</keyword>
<keyword id="KW-0539">Nucleus</keyword>
<keyword id="KW-1185">Reference proteome</keyword>
<dbReference type="EMBL" id="CR380957">
    <property type="protein sequence ID" value="CAG61623.1"/>
    <property type="molecule type" value="Genomic_DNA"/>
</dbReference>
<dbReference type="RefSeq" id="XP_448660.1">
    <property type="nucleotide sequence ID" value="XM_448660.1"/>
</dbReference>
<dbReference type="SMR" id="Q6FM84"/>
<dbReference type="FunCoup" id="Q6FM84">
    <property type="interactions" value="18"/>
</dbReference>
<dbReference type="STRING" id="284593.Q6FM84"/>
<dbReference type="EnsemblFungi" id="CAGL0K10142g-T">
    <property type="protein sequence ID" value="CAGL0K10142g-T-p1"/>
    <property type="gene ID" value="CAGL0K10142g"/>
</dbReference>
<dbReference type="KEGG" id="cgr:2890110"/>
<dbReference type="CGD" id="CAL0134723">
    <property type="gene designation" value="CAGL0K10142g"/>
</dbReference>
<dbReference type="VEuPathDB" id="FungiDB:CAGL0K10142g"/>
<dbReference type="eggNOG" id="ENOG502S0XB">
    <property type="taxonomic scope" value="Eukaryota"/>
</dbReference>
<dbReference type="HOGENOM" id="CLU_1115918_0_0_1"/>
<dbReference type="InParanoid" id="Q6FM84"/>
<dbReference type="OMA" id="WLKLHLN"/>
<dbReference type="Proteomes" id="UP000002428">
    <property type="component" value="Chromosome K"/>
</dbReference>
<dbReference type="GO" id="GO:0005634">
    <property type="term" value="C:nucleus"/>
    <property type="evidence" value="ECO:0007669"/>
    <property type="project" value="UniProtKB-SubCell"/>
</dbReference>
<dbReference type="GO" id="GO:0097196">
    <property type="term" value="C:Shu complex"/>
    <property type="evidence" value="ECO:0007669"/>
    <property type="project" value="EnsemblFungi"/>
</dbReference>
<dbReference type="GO" id="GO:0035861">
    <property type="term" value="C:site of double-strand break"/>
    <property type="evidence" value="ECO:0007669"/>
    <property type="project" value="EnsemblFungi"/>
</dbReference>
<dbReference type="GO" id="GO:0000730">
    <property type="term" value="P:DNA recombinase assembly"/>
    <property type="evidence" value="ECO:0007669"/>
    <property type="project" value="EnsemblFungi"/>
</dbReference>
<dbReference type="GO" id="GO:0043007">
    <property type="term" value="P:maintenance of rDNA"/>
    <property type="evidence" value="ECO:0007669"/>
    <property type="project" value="EnsemblFungi"/>
</dbReference>
<reference key="1">
    <citation type="journal article" date="2004" name="Nature">
        <title>Genome evolution in yeasts.</title>
        <authorList>
            <person name="Dujon B."/>
            <person name="Sherman D."/>
            <person name="Fischer G."/>
            <person name="Durrens P."/>
            <person name="Casaregola S."/>
            <person name="Lafontaine I."/>
            <person name="de Montigny J."/>
            <person name="Marck C."/>
            <person name="Neuveglise C."/>
            <person name="Talla E."/>
            <person name="Goffard N."/>
            <person name="Frangeul L."/>
            <person name="Aigle M."/>
            <person name="Anthouard V."/>
            <person name="Babour A."/>
            <person name="Barbe V."/>
            <person name="Barnay S."/>
            <person name="Blanchin S."/>
            <person name="Beckerich J.-M."/>
            <person name="Beyne E."/>
            <person name="Bleykasten C."/>
            <person name="Boisrame A."/>
            <person name="Boyer J."/>
            <person name="Cattolico L."/>
            <person name="Confanioleri F."/>
            <person name="de Daruvar A."/>
            <person name="Despons L."/>
            <person name="Fabre E."/>
            <person name="Fairhead C."/>
            <person name="Ferry-Dumazet H."/>
            <person name="Groppi A."/>
            <person name="Hantraye F."/>
            <person name="Hennequin C."/>
            <person name="Jauniaux N."/>
            <person name="Joyet P."/>
            <person name="Kachouri R."/>
            <person name="Kerrest A."/>
            <person name="Koszul R."/>
            <person name="Lemaire M."/>
            <person name="Lesur I."/>
            <person name="Ma L."/>
            <person name="Muller H."/>
            <person name="Nicaud J.-M."/>
            <person name="Nikolski M."/>
            <person name="Oztas S."/>
            <person name="Ozier-Kalogeropoulos O."/>
            <person name="Pellenz S."/>
            <person name="Potier S."/>
            <person name="Richard G.-F."/>
            <person name="Straub M.-L."/>
            <person name="Suleau A."/>
            <person name="Swennen D."/>
            <person name="Tekaia F."/>
            <person name="Wesolowski-Louvel M."/>
            <person name="Westhof E."/>
            <person name="Wirth B."/>
            <person name="Zeniou-Meyer M."/>
            <person name="Zivanovic Y."/>
            <person name="Bolotin-Fukuhara M."/>
            <person name="Thierry A."/>
            <person name="Bouchier C."/>
            <person name="Caudron B."/>
            <person name="Scarpelli C."/>
            <person name="Gaillardin C."/>
            <person name="Weissenbach J."/>
            <person name="Wincker P."/>
            <person name="Souciet J.-L."/>
        </authorList>
    </citation>
    <scope>NUCLEOTIDE SEQUENCE [LARGE SCALE GENOMIC DNA]</scope>
    <source>
        <strain>ATCC 2001 / BCRC 20586 / JCM 3761 / NBRC 0622 / NRRL Y-65 / CBS 138</strain>
    </source>
</reference>
<evidence type="ECO:0000250" key="1"/>
<evidence type="ECO:0000305" key="2"/>
<gene>
    <name type="primary">SHU2</name>
    <name type="ordered locus">CAGL0K10142g</name>
</gene>
<organism>
    <name type="scientific">Candida glabrata (strain ATCC 2001 / BCRC 20586 / JCM 3761 / NBRC 0622 / NRRL Y-65 / CBS 138)</name>
    <name type="common">Yeast</name>
    <name type="synonym">Nakaseomyces glabratus</name>
    <dbReference type="NCBI Taxonomy" id="284593"/>
    <lineage>
        <taxon>Eukaryota</taxon>
        <taxon>Fungi</taxon>
        <taxon>Dikarya</taxon>
        <taxon>Ascomycota</taxon>
        <taxon>Saccharomycotina</taxon>
        <taxon>Saccharomycetes</taxon>
        <taxon>Saccharomycetales</taxon>
        <taxon>Saccharomycetaceae</taxon>
        <taxon>Nakaseomyces</taxon>
    </lineage>
</organism>
<protein>
    <recommendedName>
        <fullName>Suppressor of hydroxyurea sensitivity protein 2</fullName>
    </recommendedName>
</protein>
<name>SHU2_CANGA</name>
<feature type="chain" id="PRO_0000409732" description="Suppressor of hydroxyurea sensitivity protein 2">
    <location>
        <begin position="1"/>
        <end position="255"/>
    </location>
</feature>
<sequence>MNEDASVINYSEIFSTLVKDDGVDDMVASFLYYMFPRELFIRGLSLLESSDMFIYVFDAMKGESSESEVNTDVDTSVNLSSKENIATSTTATQINAKDNSVDVTKNYLNKLYEDDDLLQYRLIVKSSSSDGIETPVYVDLHNWLCSCEEYTEIMRECLLADKDLVQEFVQLIDDFSCFRDDTFGQIEAHSLSLQKYVNTKKLLCPHLLAYSIILLSSPKVLRHYTVEKPGVIVIPITSIDEWLKLHINVLYSEKK</sequence>